<comment type="function">
    <text evidence="1 4 5 6 7 9 10 11 12 13 14 15">Symporter that cotransports specific neutral amino acids and sodium ions, coupled to an H(+) antiporter activity (PubMed:10619430, PubMed:10823827, PubMed:11742981, PubMed:11850497, PubMed:16249471, PubMed:17148440, PubMed:19596860, PubMed:21525297, PubMed:28272791, PubMed:29561757). Mainly participates in the glutamate-GABA-glutamine cycle in brain where it transports L-glutamine from astrocytes in the intercellular space for the replenishment of both neurotransmitters glutamate and gamma-aminobutyric acid (GABA) in neurons (PubMed:10619430, PubMed:28272791, PubMed:29561757). Also functions as the major influx transporter in ganglion cells mediating the uptake of glutamine (By similarity). The transport activity is specific for L-glutamine, L-histidine and L-asparagine (PubMed:10619430, PubMed:10823827, PubMed:11742981, PubMed:11850497, PubMed:16249471, PubMed:17148440, PubMed:19596860, PubMed:21525297, PubMed:28272791, PubMed:29561757). The transport is electroneutral coupled to the cotransport of 1 Na(+) and the antiport of 1 H(+), pH dependent, saturable, Li(+) tolerant and functions in both direction depending on the concentration gradients of its substrates and cotransported ions (PubMed:10619430, PubMed:10823827, PubMed:11742981, PubMed:11850497, PubMed:16249471, PubMed:17148440, PubMed:17909850, PubMed:19596860, PubMed:28272791). Also mediates an amino acid-gated H(+) conductance that is not stoichiometrically coupled to the amino acid transport but which influences the ionic gradients that drive the amino acid transport (PubMed:11742981). In addition, may play a role in nitrogen metabolism, amino acid homeostasis, glucose metabolism and renal ammoniagenesis (By similarity).</text>
</comment>
<comment type="catalytic activity">
    <reaction evidence="4 6 7 9 10 12 13 14 15">
        <text>L-glutamine(out) + Na(+)(out) + H(+)(in) = L-glutamine(in) + Na(+)(in) + H(+)(out)</text>
        <dbReference type="Rhea" id="RHEA:71127"/>
        <dbReference type="ChEBI" id="CHEBI:15378"/>
        <dbReference type="ChEBI" id="CHEBI:29101"/>
        <dbReference type="ChEBI" id="CHEBI:58359"/>
    </reaction>
    <physiologicalReaction direction="left-to-right" evidence="4 6 7 9 10 14 15 19">
        <dbReference type="Rhea" id="RHEA:71128"/>
    </physiologicalReaction>
    <physiologicalReaction direction="right-to-left" evidence="4 7 14 15">
        <dbReference type="Rhea" id="RHEA:71129"/>
    </physiologicalReaction>
</comment>
<comment type="catalytic activity">
    <reaction evidence="4 5 6 12 13 14">
        <text>L-asparagine(out) + Na(+)(out) + H(+)(in) = L-asparagine(in) + Na(+)(in) + H(+)(out)</text>
        <dbReference type="Rhea" id="RHEA:71131"/>
        <dbReference type="ChEBI" id="CHEBI:15378"/>
        <dbReference type="ChEBI" id="CHEBI:29101"/>
        <dbReference type="ChEBI" id="CHEBI:58048"/>
    </reaction>
    <physiologicalReaction direction="left-to-right" evidence="4 6 14 17 19">
        <dbReference type="Rhea" id="RHEA:71132"/>
    </physiologicalReaction>
    <physiologicalReaction direction="right-to-left" evidence="4 14">
        <dbReference type="Rhea" id="RHEA:71133"/>
    </physiologicalReaction>
</comment>
<comment type="catalytic activity">
    <reaction evidence="4 6 14">
        <text>L-histidine(out) + Na(+)(out) + H(+)(in) = L-histidine(in) + Na(+)(in) + H(+)(out)</text>
        <dbReference type="Rhea" id="RHEA:71135"/>
        <dbReference type="ChEBI" id="CHEBI:15378"/>
        <dbReference type="ChEBI" id="CHEBI:29101"/>
        <dbReference type="ChEBI" id="CHEBI:57595"/>
    </reaction>
    <physiologicalReaction direction="left-to-right" evidence="4 14 18">
        <dbReference type="Rhea" id="RHEA:71136"/>
    </physiologicalReaction>
    <physiologicalReaction direction="right-to-left" evidence="4 14">
        <dbReference type="Rhea" id="RHEA:71137"/>
    </physiologicalReaction>
</comment>
<comment type="activity regulation">
    <text evidence="11">L-glutamine efflux and L-glutamine uptake are regulated by CO2/HCO3(-) through SLC4A4 leading to modulation of cytosolic pH and Na(+)concentration.</text>
</comment>
<comment type="biophysicochemical properties">
    <kinetics>
        <KM evidence="4">1.1 mM for L-glutamine</KM>
        <KM evidence="7">1.5 mM for L-glutamine (at pH 7.4)</KM>
        <KM evidence="7">31 mM for sodium ion (at pH 7)</KM>
        <KM evidence="7">38 mM for sodium ion (at pH 6)</KM>
        <KM evidence="7">6.3 mM for sodium ion (at pH 8)</KM>
        <KM evidence="7">3.3 mM for L-glutamine (at pH 6)</KM>
        <KM evidence="7">2.4 mM for L-glutamine (at pH 7)</KM>
        <KM evidence="7">1.6 mM for L-glutamine (at pH 8)</KM>
    </kinetics>
    <phDependence>
        <text evidence="9">Optimum pH is 8.</text>
    </phDependence>
</comment>
<comment type="subcellular location">
    <subcellularLocation>
        <location evidence="4 10 12 13 15">Cell membrane</location>
        <topology evidence="2">Multi-pass membrane protein</topology>
    </subcellularLocation>
    <subcellularLocation>
        <location evidence="8">Basolateral cell membrane</location>
    </subcellularLocation>
    <text evidence="1 8">The localization appears to be basolateral in the plasma membrane of hepatocytes surrounding the central vein. Localized at the cerebrospinal fluid (CSF)-facing membrane of the choroid plexus epithelial cells. In astrocytes, the localization at cell membrane is decreased by ammonia through the PKC signaling. Expressed in both luminal and abluminal plasma membranes of larger microvessels and blood brain barrier (BBB) capillaries (By similarity). Restricted to the basolateral membranes of S3 segment cells of the proximal tubules (PubMed:15716335).</text>
</comment>
<comment type="tissue specificity">
    <text evidence="4 5 8">Highly expressed in liver (PubMed:10619430). Expressed in skeletal muscle. Expressed in kidney, heart and brain (PubMed:10619430). Not detected in gut, lung or spleen (PubMed:10619430). Expressed ubiquitously in hepatocytes in liver whereas in kidney expression is restricted to the medulla (PubMed:10619430). Within brain, expressed in glial cells (PubMed:10619430). In the cerebellum, expressed on Bergmann glial fibers in the molecular layer and astrocytes in the granule layer (PubMed:10619430). Expressed in brain kidney and liver (at protein level) (PubMed:15716335). In the adult kidney, highly expressed in the outer strip of the outer medulla and medullary rays penetrating into the kidney cortex (at protein level) (PubMed:15716335).</text>
</comment>
<comment type="induction">
    <text evidence="8">Induced by chronic metabolic acidosis (CMA).</text>
</comment>
<comment type="PTM">
    <text evidence="13 15">Phosphorylation at Ser-52 induces internalization and sequestration into an intracellular reservoir (PubMed:21525297, PubMed:29561757). During dephosphorylation by protein phosphatases, can recycle back to the plasma membrane and regain activity. Prolonged phosphorylation results in its degradation (PubMed:21525297).</text>
</comment>
<comment type="similarity">
    <text evidence="16">Belongs to the amino acid/polyamine transporter 2 family.</text>
</comment>
<comment type="caution">
    <text evidence="17 18">Fei et al (PMID:10823827) shows that the transport process is electrogenic with a Na(+):L-glutamine stoichiometry of 2:1, contrary to the conclusions of Chaudhry et al (PMID:10619430) who finds that the transport is electroneutral with a Na(+):L-glutamine stoichiometry of 1:1. Chaudhry et al (PMID=11742981) shows that this electrogenic transport describes by Fei et al (PMID=10823827) would correspond to an amino acid-gated H(+) conductance that is not stoichiometrically coupled to the amino acid transport but which influences the ionic gradients that drive the amino acid transport.</text>
</comment>
<evidence type="ECO:0000250" key="1">
    <source>
        <dbReference type="UniProtKB" id="Q9DCP2"/>
    </source>
</evidence>
<evidence type="ECO:0000255" key="2"/>
<evidence type="ECO:0000255" key="3">
    <source>
        <dbReference type="PROSITE-ProRule" id="PRU00114"/>
    </source>
</evidence>
<evidence type="ECO:0000269" key="4">
    <source>
    </source>
</evidence>
<evidence type="ECO:0000269" key="5">
    <source>
    </source>
</evidence>
<evidence type="ECO:0000269" key="6">
    <source>
    </source>
</evidence>
<evidence type="ECO:0000269" key="7">
    <source>
    </source>
</evidence>
<evidence type="ECO:0000269" key="8">
    <source>
    </source>
</evidence>
<evidence type="ECO:0000269" key="9">
    <source>
    </source>
</evidence>
<evidence type="ECO:0000269" key="10">
    <source>
    </source>
</evidence>
<evidence type="ECO:0000269" key="11">
    <source>
    </source>
</evidence>
<evidence type="ECO:0000269" key="12">
    <source>
    </source>
</evidence>
<evidence type="ECO:0000269" key="13">
    <source>
    </source>
</evidence>
<evidence type="ECO:0000269" key="14">
    <source>
    </source>
</evidence>
<evidence type="ECO:0000269" key="15">
    <source>
    </source>
</evidence>
<evidence type="ECO:0000305" key="16"/>
<evidence type="ECO:0000305" key="17">
    <source>
    </source>
</evidence>
<evidence type="ECO:0000305" key="18">
    <source>
    </source>
</evidence>
<evidence type="ECO:0000305" key="19">
    <source>
    </source>
</evidence>
<evidence type="ECO:0000312" key="20">
    <source>
        <dbReference type="EMBL" id="AAF81797.1"/>
    </source>
</evidence>
<evidence type="ECO:0000312" key="21">
    <source>
        <dbReference type="RGD" id="628620"/>
    </source>
</evidence>
<name>S38A3_RAT</name>
<sequence length="504" mass="55637">MEIPRQTEMVELVPNGKHLEGLLPVGMPTADTQRAEDAQHCGEGKGFLQQSSSKEPHFTDFEGKTSFGMSVFNLSNAIMGSGILGLAYAMANTGIILFLFLLTAVALLSSYSIHLLLKSSGIVGIRAYEQLGYRAFGTPGKLAAALAITLQNIGAMSSYLYIIKSELPLVIQTFLNLEKPTPVWYMDGNYLVILVSVIIILPLALMRQLGYLGYSSGFSLSCMVFFLIAVIYKKFQVPCPLAHNLVNATGNFSHMVVVEEKSQLQSEPDTAEAFCTPSYFTLNSQTAYTIPIMAFAFVCHPEVLPIYTELKDPSKRKMQHISNLSIAVMYVMYFLAALFGYLTFYDGVESELLHTYSKVDPFDVLILCVRVAVLIAVTLTVPIVLFPVRRAIQQMLFQNQEFSWLRHVLIATGLLTCINLLVIFAPNILGIFGIIGATSAPCLIFIFPAIFYFRIMPTEKEPVRSTPKILALCFAAVGFLLMTMSLSFIITDWVSGTSQHGGNH</sequence>
<protein>
    <recommendedName>
        <fullName evidence="16">Sodium-coupled neutral amino acid transporter 3</fullName>
    </recommendedName>
    <alternativeName>
        <fullName>N-system amino acid transporter 1</fullName>
    </alternativeName>
    <alternativeName>
        <fullName>Na(+)-coupled neutral amino acid transporter 3</fullName>
    </alternativeName>
    <alternativeName>
        <fullName>Solute carrier family 38 member 3</fullName>
    </alternativeName>
    <alternativeName>
        <fullName>System N amino acid transporter 1</fullName>
    </alternativeName>
</protein>
<accession>Q9JHZ9</accession>
<accession>Q66HS0</accession>
<organism>
    <name type="scientific">Rattus norvegicus</name>
    <name type="common">Rat</name>
    <dbReference type="NCBI Taxonomy" id="10116"/>
    <lineage>
        <taxon>Eukaryota</taxon>
        <taxon>Metazoa</taxon>
        <taxon>Chordata</taxon>
        <taxon>Craniata</taxon>
        <taxon>Vertebrata</taxon>
        <taxon>Euteleostomi</taxon>
        <taxon>Mammalia</taxon>
        <taxon>Eutheria</taxon>
        <taxon>Euarchontoglires</taxon>
        <taxon>Glires</taxon>
        <taxon>Rodentia</taxon>
        <taxon>Myomorpha</taxon>
        <taxon>Muroidea</taxon>
        <taxon>Muridae</taxon>
        <taxon>Murinae</taxon>
        <taxon>Rattus</taxon>
    </lineage>
</organism>
<proteinExistence type="evidence at protein level"/>
<feature type="chain" id="PRO_0000093830" description="Sodium-coupled neutral amino acid transporter 3">
    <location>
        <begin position="1"/>
        <end position="504"/>
    </location>
</feature>
<feature type="transmembrane region" description="Helical" evidence="2">
    <location>
        <begin position="82"/>
        <end position="102"/>
    </location>
</feature>
<feature type="transmembrane region" description="Helical" evidence="2">
    <location>
        <begin position="105"/>
        <end position="125"/>
    </location>
</feature>
<feature type="transmembrane region" description="Helical" evidence="2">
    <location>
        <begin position="143"/>
        <end position="163"/>
    </location>
</feature>
<feature type="transmembrane region" description="Helical" evidence="2">
    <location>
        <begin position="186"/>
        <end position="206"/>
    </location>
</feature>
<feature type="transmembrane region" description="Helical" evidence="2">
    <location>
        <begin position="212"/>
        <end position="232"/>
    </location>
</feature>
<feature type="transmembrane region" description="Helical" evidence="2">
    <location>
        <begin position="287"/>
        <end position="307"/>
    </location>
</feature>
<feature type="transmembrane region" description="Helical" evidence="2">
    <location>
        <begin position="324"/>
        <end position="344"/>
    </location>
</feature>
<feature type="transmembrane region" description="Helical" evidence="2">
    <location>
        <begin position="366"/>
        <end position="386"/>
    </location>
</feature>
<feature type="transmembrane region" description="Helical" evidence="2">
    <location>
        <begin position="408"/>
        <end position="428"/>
    </location>
</feature>
<feature type="transmembrane region" description="Helical" evidence="2">
    <location>
        <begin position="431"/>
        <end position="451"/>
    </location>
</feature>
<feature type="transmembrane region" description="Helical" evidence="2">
    <location>
        <begin position="469"/>
        <end position="489"/>
    </location>
</feature>
<feature type="site" description="Modulates L-glutamine-induced conductances and Na(+) binding" evidence="12">
    <location>
        <position position="76"/>
    </location>
</feature>
<feature type="modified residue" description="Phosphoserine; by PKC" evidence="13">
    <location>
        <position position="52"/>
    </location>
</feature>
<feature type="glycosylation site" description="N-linked (GlcNAc...) asparagine" evidence="2">
    <location>
        <position position="73"/>
    </location>
</feature>
<feature type="glycosylation site" description="N-linked (GlcNAc...) asparagine" evidence="2">
    <location>
        <position position="247"/>
    </location>
</feature>
<feature type="glycosylation site" description="N-linked (GlcNAc...) asparagine" evidence="2">
    <location>
        <position position="251"/>
    </location>
</feature>
<feature type="glycosylation site" description="N-linked (GlcNAc...) asparagine" evidence="2">
    <location>
        <position position="323"/>
    </location>
</feature>
<feature type="disulfide bond" evidence="3">
    <location>
        <begin position="239"/>
        <end position="275"/>
    </location>
</feature>
<feature type="mutagenesis site" description="Does not affect phosphorylation by PKC." evidence="13">
    <original>T</original>
    <variation>A</variation>
    <location>
        <position position="32"/>
    </location>
</feature>
<feature type="mutagenesis site" description="Loss of phosphorylation by PKC." evidence="13">
    <original>SSS</original>
    <variation>AAA</variation>
    <location>
        <begin position="51"/>
        <end position="53"/>
    </location>
</feature>
<feature type="mutagenesis site" description="Does not affect phosphorylation by PKC." evidence="13">
    <original>S</original>
    <variation>A</variation>
    <location>
        <position position="51"/>
    </location>
</feature>
<feature type="mutagenesis site" description="Loss of phosphorylation by PKC. Reduces glutamine uptake upon phorbol-12-myristate-13-acetate (PMA) stimulation." evidence="13">
    <original>S</original>
    <variation>A</variation>
    <location>
        <position position="52"/>
    </location>
</feature>
<feature type="mutagenesis site" description="Does not affect phosphorylation by PKC." evidence="13">
    <original>S</original>
    <variation>A</variation>
    <location>
        <position position="53"/>
    </location>
</feature>
<feature type="mutagenesis site" description="Does not affect phosphorylation by PKC." evidence="13">
    <original>T</original>
    <variation>A</variation>
    <location>
        <position position="59"/>
    </location>
</feature>
<feature type="mutagenesis site" description="Abolishes L-glutamine transport activity. Induces a chloride transport. Increases the alkali-induced substrate-independent conductance. Does not affect cell membrane localization." evidence="12">
    <original>N</original>
    <variation>D</variation>
    <location>
        <position position="76"/>
    </location>
</feature>
<feature type="mutagenesis site" description="Abolishes L-glutamine transport activity. Induces a chloride transport. Increases the alkali-induced substrate-independent conductance. Does not affect cell membrane localization." evidence="12">
    <original>N</original>
    <variation>E</variation>
    <location>
        <position position="76"/>
    </location>
</feature>
<feature type="mutagenesis site" description="Abolishes L-glutamine transport activity. Inhibits asparagine transport activity. Increases the alkali-induced substrate-independent conductance. Significantly slow proton antiport activity. Affects cell membrane localization." evidence="10 12">
    <original>N</original>
    <variation>H</variation>
    <location>
        <position position="76"/>
    </location>
</feature>
<feature type="mutagenesis site" description="Abolishes glutamine transport activity. Increases the alkali-induced substrate-independent conductance. Does not affect cell membrane localization." evidence="12">
    <original>N</original>
    <variation>Q</variation>
    <location>
        <position position="76"/>
    </location>
</feature>
<feature type="mutagenesis site" description="Abolishes glutamine transport activity. Increases the alkali-induced substrate-independent conductance. Does not affect cell membrane localization." evidence="12">
    <original>N</original>
    <variation>S</variation>
    <location>
        <position position="76"/>
    </location>
</feature>
<feature type="mutagenesis site" description="Does not affect L-glutamine transport activity. Does not affect cell membrane localization." evidence="10">
    <original>G</original>
    <variation>A</variation>
    <location>
        <position position="210"/>
    </location>
</feature>
<feature type="mutagenesis site" description="Does not affect L-glutamine transport activity. Does not affect cell membrane localization." evidence="10">
    <original>S</original>
    <variation>A</variation>
    <location>
        <position position="215"/>
    </location>
</feature>
<feature type="mutagenesis site" description="Does not affect L-glutamine transport activity. Does not affect cell membrane localization." evidence="10">
    <original>H</original>
    <variation>Q</variation>
    <location>
        <position position="300"/>
    </location>
</feature>
<feature type="mutagenesis site" description="Does not affect L-glutamine transport activity. Does not affect cell membrane localization." evidence="10">
    <original>T</original>
    <variation>A</variation>
    <location>
        <position position="343"/>
    </location>
</feature>
<feature type="mutagenesis site" description="Does not affect L-glutamine transport activity. Does not affect cell membrane localization." evidence="10">
    <original>R</original>
    <variation>Q</variation>
    <location>
        <position position="370"/>
    </location>
</feature>
<feature type="mutagenesis site" description="Significantly decreases L-glutamine transport activity. Does not affect cell membrane localization. Removes the cation conductance at pH 7.4. Does not affect the proton conductance at pH 8.4. Significantly dereases transport activity with LiCl." evidence="10">
    <original>T</original>
    <variation>A</variation>
    <location>
        <position position="380"/>
    </location>
</feature>
<gene>
    <name evidence="21" type="primary">Slc38a3</name>
    <name type="synonym">Snat3</name>
</gene>
<keyword id="KW-0029">Amino-acid transport</keyword>
<keyword id="KW-0050">Antiport</keyword>
<keyword id="KW-1003">Cell membrane</keyword>
<keyword id="KW-1015">Disulfide bond</keyword>
<keyword id="KW-0325">Glycoprotein</keyword>
<keyword id="KW-0406">Ion transport</keyword>
<keyword id="KW-0472">Membrane</keyword>
<keyword id="KW-0597">Phosphoprotein</keyword>
<keyword id="KW-1185">Reference proteome</keyword>
<keyword id="KW-0915">Sodium</keyword>
<keyword id="KW-0739">Sodium transport</keyword>
<keyword id="KW-0769">Symport</keyword>
<keyword id="KW-0812">Transmembrane</keyword>
<keyword id="KW-1133">Transmembrane helix</keyword>
<keyword id="KW-0813">Transport</keyword>
<dbReference type="EMBL" id="AF273025">
    <property type="protein sequence ID" value="AAF81797.1"/>
    <property type="molecule type" value="mRNA"/>
</dbReference>
<dbReference type="EMBL" id="BC081717">
    <property type="protein sequence ID" value="AAH81717.1"/>
    <property type="molecule type" value="mRNA"/>
</dbReference>
<dbReference type="RefSeq" id="NP_665719.1">
    <property type="nucleotide sequence ID" value="NM_145776.3"/>
</dbReference>
<dbReference type="RefSeq" id="XP_038936800.1">
    <property type="nucleotide sequence ID" value="XM_039080872.2"/>
</dbReference>
<dbReference type="SMR" id="Q9JHZ9"/>
<dbReference type="BioGRID" id="251668">
    <property type="interactions" value="1"/>
</dbReference>
<dbReference type="FunCoup" id="Q9JHZ9">
    <property type="interactions" value="292"/>
</dbReference>
<dbReference type="STRING" id="10116.ENSRNOP00000023623"/>
<dbReference type="GlyCosmos" id="Q9JHZ9">
    <property type="glycosylation" value="4 sites, No reported glycans"/>
</dbReference>
<dbReference type="GlyGen" id="Q9JHZ9">
    <property type="glycosylation" value="4 sites"/>
</dbReference>
<dbReference type="iPTMnet" id="Q9JHZ9"/>
<dbReference type="PhosphoSitePlus" id="Q9JHZ9"/>
<dbReference type="PaxDb" id="10116-ENSRNOP00000023623"/>
<dbReference type="Ensembl" id="ENSRNOT00000023623.8">
    <property type="protein sequence ID" value="ENSRNOP00000023623.4"/>
    <property type="gene ID" value="ENSRNOG00000016827.8"/>
</dbReference>
<dbReference type="GeneID" id="252919"/>
<dbReference type="KEGG" id="rno:252919"/>
<dbReference type="UCSC" id="RGD:628620">
    <property type="organism name" value="rat"/>
</dbReference>
<dbReference type="AGR" id="RGD:628620"/>
<dbReference type="CTD" id="10991"/>
<dbReference type="RGD" id="628620">
    <property type="gene designation" value="Slc38a3"/>
</dbReference>
<dbReference type="eggNOG" id="KOG1305">
    <property type="taxonomic scope" value="Eukaryota"/>
</dbReference>
<dbReference type="GeneTree" id="ENSGT00940000157127"/>
<dbReference type="HOGENOM" id="CLU_009020_0_2_1"/>
<dbReference type="InParanoid" id="Q9JHZ9"/>
<dbReference type="OMA" id="MEVAGEM"/>
<dbReference type="OrthoDB" id="655540at2759"/>
<dbReference type="PhylomeDB" id="Q9JHZ9"/>
<dbReference type="TreeFam" id="TF328787"/>
<dbReference type="Reactome" id="R-RNO-352230">
    <property type="pathway name" value="Amino acid transport across the plasma membrane"/>
</dbReference>
<dbReference type="PRO" id="PR:Q9JHZ9"/>
<dbReference type="Proteomes" id="UP000002494">
    <property type="component" value="Chromosome 8"/>
</dbReference>
<dbReference type="Bgee" id="ENSRNOG00000016827">
    <property type="expression patterns" value="Expressed in liver and 18 other cell types or tissues"/>
</dbReference>
<dbReference type="GO" id="GO:0016324">
    <property type="term" value="C:apical plasma membrane"/>
    <property type="evidence" value="ECO:0000266"/>
    <property type="project" value="RGD"/>
</dbReference>
<dbReference type="GO" id="GO:0016323">
    <property type="term" value="C:basolateral plasma membrane"/>
    <property type="evidence" value="ECO:0000314"/>
    <property type="project" value="RGD"/>
</dbReference>
<dbReference type="GO" id="GO:0016020">
    <property type="term" value="C:membrane"/>
    <property type="evidence" value="ECO:0000266"/>
    <property type="project" value="RGD"/>
</dbReference>
<dbReference type="GO" id="GO:0005886">
    <property type="term" value="C:plasma membrane"/>
    <property type="evidence" value="ECO:0000314"/>
    <property type="project" value="UniProtKB"/>
</dbReference>
<dbReference type="GO" id="GO:0022853">
    <property type="term" value="F:active monoatomic ion transmembrane transporter activity"/>
    <property type="evidence" value="ECO:0007669"/>
    <property type="project" value="UniProtKB-ARBA"/>
</dbReference>
<dbReference type="GO" id="GO:0015180">
    <property type="term" value="F:L-alanine transmembrane transporter activity"/>
    <property type="evidence" value="ECO:0000266"/>
    <property type="project" value="RGD"/>
</dbReference>
<dbReference type="GO" id="GO:0015182">
    <property type="term" value="F:L-asparagine transmembrane transporter activity"/>
    <property type="evidence" value="ECO:0000314"/>
    <property type="project" value="UniProtKB"/>
</dbReference>
<dbReference type="GO" id="GO:0140831">
    <property type="term" value="F:L-asparagine, sodium:proton antiporter activity"/>
    <property type="evidence" value="ECO:0000314"/>
    <property type="project" value="UniProtKB"/>
</dbReference>
<dbReference type="GO" id="GO:0015186">
    <property type="term" value="F:L-glutamine transmembrane transporter activity"/>
    <property type="evidence" value="ECO:0000314"/>
    <property type="project" value="UniProtKB"/>
</dbReference>
<dbReference type="GO" id="GO:0140830">
    <property type="term" value="F:L-glutamine, sodium:proton antiporter activity"/>
    <property type="evidence" value="ECO:0000314"/>
    <property type="project" value="UniProtKB"/>
</dbReference>
<dbReference type="GO" id="GO:0005290">
    <property type="term" value="F:L-histidine transmembrane transporter activity"/>
    <property type="evidence" value="ECO:0000314"/>
    <property type="project" value="UniProtKB"/>
</dbReference>
<dbReference type="GO" id="GO:0140832">
    <property type="term" value="F:L-histidine, sodium:proton antiporter activity"/>
    <property type="evidence" value="ECO:0000314"/>
    <property type="project" value="UniProtKB"/>
</dbReference>
<dbReference type="GO" id="GO:0005295">
    <property type="term" value="F:neutral L-amino acid:sodium symporter activity"/>
    <property type="evidence" value="ECO:0000314"/>
    <property type="project" value="UniProtKB"/>
</dbReference>
<dbReference type="GO" id="GO:0003333">
    <property type="term" value="P:amino acid transmembrane transport"/>
    <property type="evidence" value="ECO:0000318"/>
    <property type="project" value="GO_Central"/>
</dbReference>
<dbReference type="GO" id="GO:0006867">
    <property type="term" value="P:asparagine transport"/>
    <property type="evidence" value="ECO:0000314"/>
    <property type="project" value="UniProtKB"/>
</dbReference>
<dbReference type="GO" id="GO:0051365">
    <property type="term" value="P:cellular response to potassium ion starvation"/>
    <property type="evidence" value="ECO:0000266"/>
    <property type="project" value="RGD"/>
</dbReference>
<dbReference type="GO" id="GO:0007565">
    <property type="term" value="P:female pregnancy"/>
    <property type="evidence" value="ECO:0000270"/>
    <property type="project" value="RGD"/>
</dbReference>
<dbReference type="GO" id="GO:0010585">
    <property type="term" value="P:glutamine secretion"/>
    <property type="evidence" value="ECO:0000314"/>
    <property type="project" value="UniProtKB"/>
</dbReference>
<dbReference type="GO" id="GO:0006868">
    <property type="term" value="P:glutamine transport"/>
    <property type="evidence" value="ECO:0000314"/>
    <property type="project" value="UniProtKB"/>
</dbReference>
<dbReference type="GO" id="GO:0015817">
    <property type="term" value="P:histidine transport"/>
    <property type="evidence" value="ECO:0000314"/>
    <property type="project" value="UniProtKB"/>
</dbReference>
<dbReference type="GO" id="GO:0080144">
    <property type="term" value="P:intracellular amino acid homeostasis"/>
    <property type="evidence" value="ECO:0000250"/>
    <property type="project" value="UniProtKB"/>
</dbReference>
<dbReference type="GO" id="GO:0015808">
    <property type="term" value="P:L-alanine transport"/>
    <property type="evidence" value="ECO:0000266"/>
    <property type="project" value="RGD"/>
</dbReference>
<dbReference type="GO" id="GO:1903811">
    <property type="term" value="P:L-asparagine import across plasma membrane"/>
    <property type="evidence" value="ECO:0000314"/>
    <property type="project" value="UniProtKB"/>
</dbReference>
<dbReference type="GO" id="GO:1903803">
    <property type="term" value="P:L-glutamine import across plasma membrane"/>
    <property type="evidence" value="ECO:0000314"/>
    <property type="project" value="UniProtKB"/>
</dbReference>
<dbReference type="GO" id="GO:1903810">
    <property type="term" value="P:L-histidine import across plasma membrane"/>
    <property type="evidence" value="ECO:0000250"/>
    <property type="project" value="UniProtKB"/>
</dbReference>
<dbReference type="GO" id="GO:1902024">
    <property type="term" value="P:L-histidine transport"/>
    <property type="evidence" value="ECO:0000314"/>
    <property type="project" value="UniProtKB"/>
</dbReference>
<dbReference type="GO" id="GO:2000487">
    <property type="term" value="P:positive regulation of glutamine transport"/>
    <property type="evidence" value="ECO:0000314"/>
    <property type="project" value="RGD"/>
</dbReference>
<dbReference type="GO" id="GO:0045944">
    <property type="term" value="P:positive regulation of transcription by RNA polymerase II"/>
    <property type="evidence" value="ECO:0000266"/>
    <property type="project" value="RGD"/>
</dbReference>
<dbReference type="InterPro" id="IPR013057">
    <property type="entry name" value="AA_transpt_TM"/>
</dbReference>
<dbReference type="PANTHER" id="PTHR22950">
    <property type="entry name" value="AMINO ACID TRANSPORTER"/>
    <property type="match status" value="1"/>
</dbReference>
<dbReference type="PANTHER" id="PTHR22950:SF22">
    <property type="entry name" value="SODIUM-COUPLED NEUTRAL AMINO ACID TRANSPORTER 3"/>
    <property type="match status" value="1"/>
</dbReference>
<dbReference type="Pfam" id="PF01490">
    <property type="entry name" value="Aa_trans"/>
    <property type="match status" value="1"/>
</dbReference>
<reference evidence="16 20" key="1">
    <citation type="journal article" date="1999" name="Cell">
        <title>Molecular analysis of system N suggests novel physiological roles in nitrogen metabolism and synaptic transmission.</title>
        <authorList>
            <person name="Chaudhry F.A."/>
            <person name="Reimer R.J."/>
            <person name="Krizaj D."/>
            <person name="Barber D."/>
            <person name="Storm-Mathisen J."/>
            <person name="Copenhagen D.R."/>
            <person name="Edwards R.H."/>
        </authorList>
    </citation>
    <scope>NUCLEOTIDE SEQUENCE [MRNA]</scope>
    <scope>FUNCTION</scope>
    <scope>BIOPHYSICOCHEMICAL PROPERTIES</scope>
    <scope>SUBCELLULAR LOCATION</scope>
    <scope>TISSUE SPECIFICITY</scope>
    <source>
        <tissue evidence="4">Brain</tissue>
    </source>
</reference>
<reference evidence="16" key="2">
    <citation type="journal article" date="2000" name="J. Biol. Chem.">
        <title>Primary structure, genomic organization, and functional and electrogenic characteristics of human system N 1, a Na+- and H+-coupled glutamine transporter.</title>
        <authorList>
            <person name="Fei Y.-J."/>
            <person name="Sugawara M."/>
            <person name="Nakanishi T."/>
            <person name="Huang W."/>
            <person name="Wang H."/>
            <person name="Prasad P.D."/>
            <person name="Leibach F.H."/>
            <person name="Ganapathy V."/>
        </authorList>
    </citation>
    <scope>NUCLEOTIDE SEQUENCE [MRNA]</scope>
    <scope>FUNCTION</scope>
    <scope>TISSUE SPECIFICITY</scope>
    <source>
        <tissue evidence="5">Skeletal muscle</tissue>
    </source>
</reference>
<reference key="3">
    <citation type="journal article" date="2004" name="Genome Res.">
        <title>The status, quality, and expansion of the NIH full-length cDNA project: the Mammalian Gene Collection (MGC).</title>
        <authorList>
            <consortium name="The MGC Project Team"/>
        </authorList>
    </citation>
    <scope>NUCLEOTIDE SEQUENCE [LARGE SCALE MRNA]</scope>
    <source>
        <tissue>Kidney</tissue>
    </source>
</reference>
<reference key="4">
    <citation type="journal article" date="2001" name="EMBO J.">
        <title>Coupled and uncoupled proton movement by amino acid transport system N.</title>
        <authorList>
            <person name="Chaudhry F.A."/>
            <person name="Krizaj D."/>
            <person name="Larsson P."/>
            <person name="Reimer R.J."/>
            <person name="Wreden C."/>
            <person name="Storm-Mathisen J."/>
            <person name="Copenhagen D."/>
            <person name="Kavanaugh M."/>
            <person name="Edwards R.H."/>
        </authorList>
    </citation>
    <scope>FUNCTION</scope>
    <scope>TRANSPORTER ACTIVITY</scope>
</reference>
<reference key="5">
    <citation type="journal article" date="2002" name="J. Physiol. (Lond.)">
        <title>Regulation of the glutamine transporter SN1 by extracellular pH and intracellular sodium ions.</title>
        <authorList>
            <person name="Broeer A."/>
            <person name="Albers A."/>
            <person name="Setiawan I."/>
            <person name="Edwards R.H."/>
            <person name="Chaudhry F.A."/>
            <person name="Lang F."/>
            <person name="Wagner C.A."/>
            <person name="Broeer S."/>
        </authorList>
    </citation>
    <scope>FUNCTION</scope>
    <scope>TRANSPORTER ACTIVITY</scope>
    <scope>ACTIVITY REGULATION</scope>
    <scope>BIOPHYSICOCHEMICAL PROPERTIES</scope>
</reference>
<reference key="6">
    <citation type="journal article" date="2005" name="Invest. Ophthalmol. Vis. Sci.">
        <title>Expression and function of glutamine transporters SN1 (SNAT3) and SN2 (SNAT5) in retinal Mueller cells.</title>
        <authorList>
            <person name="Umapathy N.S."/>
            <person name="Li W."/>
            <person name="Mysona B.A."/>
            <person name="Smith S.B."/>
            <person name="Ganapathy V."/>
        </authorList>
    </citation>
    <scope>FUNCTION</scope>
    <scope>TRANSPORTER ACTIVITY</scope>
    <scope>BIOPHYSICOCHEMICAL PROPERTIES</scope>
</reference>
<reference key="7">
    <citation type="journal article" date="2005" name="J. Am. Soc. Nephrol.">
        <title>Induction and targeting of the glutamine transporter SN1 to the basolateral membranes of cortical kidney tubule cells during chronic metabolic acidosis suggest a role in pH regulation.</title>
        <authorList>
            <person name="Solbu T.T."/>
            <person name="Boulland J.L."/>
            <person name="Zahid W."/>
            <person name="Lyamouri Bredahl M.K."/>
            <person name="Amiry-Moghaddam M."/>
            <person name="Storm-Mathisen J."/>
            <person name="Roberg B.A."/>
            <person name="Chaudhry F.A."/>
        </authorList>
    </citation>
    <scope>TISSUE SPECIFICITY</scope>
    <scope>SUBCELLULAR LOCATION</scope>
    <scope>INDUCTION</scope>
</reference>
<reference key="8">
    <citation type="journal article" date="2007" name="J. Biol. Chem.">
        <title>Heterologous expression of the glutamine transporter SNAT3 in Xenopus oocytes is associated with four modes of uncoupled transport.</title>
        <authorList>
            <person name="Schneider H.P."/>
            <person name="Broeer S."/>
            <person name="Broeer A."/>
            <person name="Deitmer J.W."/>
        </authorList>
    </citation>
    <scope>FUNCTION</scope>
    <scope>TRANSPORTER ACTIVITY</scope>
    <scope>SUBCELLULAR LOCATION</scope>
    <scope>MUTAGENESIS OF ASN-76; GLY-210; SER-215; HIS-300; THR-343; ARG-370 AND THR-380</scope>
</reference>
<reference key="9">
    <citation type="journal article" date="2008" name="Pflugers Arch.">
        <title>The sodium-bicarbonate cotransporter NBCe1 supports glutamine efflux via SNAT3 (SLC38A3) co-expressed in Xenopus oocytes.</title>
        <authorList>
            <person name="Wendel C."/>
            <person name="Becker H.M."/>
            <person name="Deitmer J.W."/>
        </authorList>
    </citation>
    <scope>FUNCTION</scope>
    <scope>ACTIVITY REGULATION</scope>
</reference>
<reference key="10">
    <citation type="journal article" date="2009" name="J. Biol. Chem.">
        <title>Mutation of asparagine 76 in the center of glutamine transporter SNAT3 modulates substrate-induced conductances and Na+ binding.</title>
        <authorList>
            <person name="Broeer S."/>
            <person name="Schneider H.P."/>
            <person name="Broeer A."/>
            <person name="Deitmer J.W."/>
        </authorList>
    </citation>
    <scope>FUNCTION</scope>
    <scope>TRANSPORTER ACTIVITY</scope>
    <scope>SUBCELLULAR LOCATION</scope>
    <scope>SITE</scope>
    <scope>MUTAGENESIS OF ASN-76</scope>
</reference>
<reference key="11">
    <citation type="journal article" date="2011" name="J. Neurosci.">
        <title>Protein kinase C-mediated phosphorylation of a single serine residue on the rat glial glutamine transporter SN1 governs its membrane trafficking.</title>
        <authorList>
            <person name="Nissen-Meyer L.S."/>
            <person name="Popescu M.C."/>
            <person name="Hamdani E.H."/>
            <person name="Chaudhry F.A."/>
        </authorList>
    </citation>
    <scope>FUNCTION</scope>
    <scope>TRANSPORTER ACTIVITY</scope>
    <scope>SUBCELLULAR LOCATION</scope>
    <scope>PHOSPHORYLATION AT SER-52</scope>
    <scope>MUTAGENESIS OF THR-32; 51-SER--SER-53; SER-51; SER-52; SER-53 AND THR-59</scope>
</reference>
<reference key="12">
    <citation type="journal article" date="2017" name="Glia">
        <title>SNAT3-mediated glutamine transport in perisynaptic astrocytes in situ is regulated by intracellular sodium.</title>
        <authorList>
            <person name="Todd A.C."/>
            <person name="Marx M.C."/>
            <person name="Hulme S.R."/>
            <person name="Broeer S."/>
            <person name="Billups B."/>
        </authorList>
    </citation>
    <scope>FUNCTION</scope>
    <scope>TRANSPORTER ACTIVITY</scope>
</reference>
<reference key="13">
    <citation type="journal article" date="2018" name="Int. J. Mol. Sci.">
        <title>PKC-Mediated Modulation of Astrocyte SNAT3 Glutamine Transporter Function at Synapses in Situ.</title>
        <authorList>
            <person name="Dong W."/>
            <person name="Todd A.C."/>
            <person name="Broeer A."/>
            <person name="Hulme S.R."/>
            <person name="Broeer S."/>
            <person name="Billups B."/>
        </authorList>
    </citation>
    <scope>FUNCTION</scope>
    <scope>TRANSPORTER ACTIVITY</scope>
    <scope>SUBCELLULAR LOCATION</scope>
</reference>